<reference key="1">
    <citation type="journal article" date="1993" name="J. Cell Biol.">
        <title>The 47-kD lens-specific protein phakinin is a tailless intermediate filament protein and an assembly partner of filensin.</title>
        <authorList>
            <person name="Merdes A."/>
            <person name="Gounari F."/>
            <person name="Georgatos S.D."/>
        </authorList>
    </citation>
    <scope>NUCLEOTIDE SEQUENCE [MRNA]</scope>
    <scope>INTERACTION WITH BFSP1</scope>
    <scope>SUBCELLULAR LOCATION</scope>
    <scope>TISSUE SPECIFICITY</scope>
    <source>
        <tissue>Lens</tissue>
    </source>
</reference>
<reference key="2">
    <citation type="submission" date="1994-08" db="EMBL/GenBank/DDBJ databases">
        <authorList>
            <person name="Merdes A."/>
        </authorList>
    </citation>
    <scope>SEQUENCE REVISION</scope>
</reference>
<reference key="3">
    <citation type="submission" date="2006-08" db="EMBL/GenBank/DDBJ databases">
        <authorList>
            <consortium name="NIH - Mammalian Gene Collection (MGC) project"/>
        </authorList>
    </citation>
    <scope>NUCLEOTIDE SEQUENCE [LARGE SCALE MRNA]</scope>
    <source>
        <strain>Hereford</strain>
        <tissue>Hypothalamus</tissue>
    </source>
</reference>
<reference key="4">
    <citation type="journal article" date="1993" name="Curr. Eye Res.">
        <title>cDNA analysis of the 49 kDa lens fiber cell cytoskeletal protein: a new, lens-specific member of the intermediate filament family?</title>
        <authorList>
            <person name="Hess J.F."/>
            <person name="Casselman J.T."/>
            <person name="FitzGerald P.G."/>
        </authorList>
    </citation>
    <scope>PROTEIN SEQUENCE OF 222-232 AND 248-277</scope>
    <source>
        <tissue>Lens</tissue>
    </source>
</reference>
<reference key="5">
    <citation type="journal article" date="1995" name="Eur. J. Cell Biol.">
        <title>Filensin is proteolytically processed during lens fiber cell differentiation by multiple independent pathways.</title>
        <authorList>
            <person name="Sandilands A."/>
            <person name="Prescott A.R."/>
            <person name="Hutcheson A.M."/>
            <person name="Quinlan R.A."/>
            <person name="Casselman J.T."/>
            <person name="FitzGerald P.G."/>
        </authorList>
    </citation>
    <scope>SUBCELLULAR LOCATION</scope>
    <scope>TISSUE SPECIFICITY</scope>
</reference>
<reference key="6">
    <citation type="journal article" date="2010" name="Invest. Ophthalmol. Vis. Sci.">
        <title>Posttranslational modifications of the bovine lens beaded filament proteins filensin and CP49.</title>
        <authorList>
            <person name="Wang Z."/>
            <person name="Obidike J.E."/>
            <person name="Schey K.L."/>
        </authorList>
    </citation>
    <scope>IDENTIFICATION BY MASS SPECTROMETRY</scope>
    <scope>TISSUE SPECIFICITY</scope>
    <scope>PROTEOLYTIC CLEAVAGE</scope>
    <scope>ACETYLATION AT SER-2</scope>
    <scope>PHOSPHORYLATION AT SER-26; SER-32; SER-35; THR-53; SER-90 AND SER-100</scope>
</reference>
<evidence type="ECO:0000250" key="1">
    <source>
        <dbReference type="UniProtKB" id="Q13515"/>
    </source>
</evidence>
<evidence type="ECO:0000250" key="2">
    <source>
        <dbReference type="UniProtKB" id="Q6NVD9"/>
    </source>
</evidence>
<evidence type="ECO:0000255" key="3"/>
<evidence type="ECO:0000255" key="4">
    <source>
        <dbReference type="PROSITE-ProRule" id="PRU01188"/>
    </source>
</evidence>
<evidence type="ECO:0000256" key="5">
    <source>
        <dbReference type="SAM" id="MobiDB-lite"/>
    </source>
</evidence>
<evidence type="ECO:0000269" key="6">
    <source>
    </source>
</evidence>
<evidence type="ECO:0000269" key="7">
    <source>
    </source>
</evidence>
<evidence type="ECO:0000269" key="8">
    <source>
    </source>
</evidence>
<evidence type="ECO:0000303" key="9">
    <source>
    </source>
</evidence>
<evidence type="ECO:0000303" key="10">
    <source>
    </source>
</evidence>
<evidence type="ECO:0000305" key="11">
    <source>
    </source>
</evidence>
<feature type="initiator methionine" description="Removed" evidence="6">
    <location>
        <position position="1"/>
    </location>
</feature>
<feature type="chain" id="PRO_0000063850" description="Phakinin" evidence="6">
    <location>
        <begin position="2"/>
        <end position="415"/>
    </location>
</feature>
<feature type="chain" id="PRO_0000448678" description="Phakinin N-terminal fragment" evidence="11">
    <location>
        <begin position="2"/>
        <end position="37"/>
    </location>
</feature>
<feature type="chain" id="PRO_0000448679" description="Phakinin C-terminal fragment" evidence="11">
    <location>
        <begin position="38"/>
        <end position="415"/>
    </location>
</feature>
<feature type="domain" description="IF rod" evidence="4">
    <location>
        <begin position="104"/>
        <end position="415"/>
    </location>
</feature>
<feature type="region of interest" description="Disordered" evidence="5">
    <location>
        <begin position="1"/>
        <end position="26"/>
    </location>
</feature>
<feature type="region of interest" description="Head">
    <location>
        <begin position="2"/>
        <end position="114"/>
    </location>
</feature>
<feature type="region of interest" description="Tail">
    <location>
        <begin position="396"/>
        <end position="415"/>
    </location>
</feature>
<feature type="coiled-coil region" evidence="3">
    <location>
        <begin position="115"/>
        <end position="144"/>
    </location>
</feature>
<feature type="coiled-coil region" evidence="3">
    <location>
        <begin position="199"/>
        <end position="248"/>
    </location>
</feature>
<feature type="coiled-coil region" evidence="3">
    <location>
        <begin position="295"/>
        <end position="395"/>
    </location>
</feature>
<feature type="site" description="Cleavage" evidence="6">
    <location>
        <begin position="37"/>
        <end position="38"/>
    </location>
</feature>
<feature type="modified residue" description="N-acetylserine" evidence="6">
    <location>
        <position position="2"/>
    </location>
</feature>
<feature type="modified residue" description="Phosphoserine" evidence="6">
    <location>
        <position position="26"/>
    </location>
</feature>
<feature type="modified residue" description="Phosphoserine" evidence="6">
    <location>
        <position position="32"/>
    </location>
</feature>
<feature type="modified residue" description="Phosphoserine" evidence="6">
    <location>
        <position position="35"/>
    </location>
</feature>
<feature type="modified residue" description="Phosphothreonine" evidence="6">
    <location>
        <position position="53"/>
    </location>
</feature>
<feature type="modified residue" description="Phosphoserine" evidence="6">
    <location>
        <position position="90"/>
    </location>
</feature>
<feature type="modified residue" description="Phosphoserine" evidence="6">
    <location>
        <position position="100"/>
    </location>
</feature>
<protein>
    <recommendedName>
        <fullName evidence="10">Phakinin</fullName>
    </recommendedName>
    <alternativeName>
        <fullName>49 kDa cytoskeletal protein</fullName>
    </alternativeName>
    <alternativeName>
        <fullName evidence="1">Beaded filament structural protein 2</fullName>
    </alternativeName>
    <alternativeName>
        <fullName evidence="1">Lens fiber cell beaded filament protein CP 47</fullName>
        <shortName evidence="1">CP47</shortName>
    </alternativeName>
    <alternativeName>
        <fullName evidence="9">Lens fiber cell beaded filament protein CP 49</fullName>
        <shortName evidence="9">CP49</shortName>
    </alternativeName>
    <alternativeName>
        <fullName evidence="1">Lens intermediate filament-like light</fullName>
        <shortName evidence="1">LIFL-L</shortName>
    </alternativeName>
    <component>
        <recommendedName>
            <fullName evidence="9">Phakinin N-terminal fragment</fullName>
        </recommendedName>
    </component>
    <component>
        <recommendedName>
            <fullName evidence="9">Phakinin C-terminal fragment</fullName>
        </recommendedName>
    </component>
</protein>
<organism>
    <name type="scientific">Bos taurus</name>
    <name type="common">Bovine</name>
    <dbReference type="NCBI Taxonomy" id="9913"/>
    <lineage>
        <taxon>Eukaryota</taxon>
        <taxon>Metazoa</taxon>
        <taxon>Chordata</taxon>
        <taxon>Craniata</taxon>
        <taxon>Vertebrata</taxon>
        <taxon>Euteleostomi</taxon>
        <taxon>Mammalia</taxon>
        <taxon>Eutheria</taxon>
        <taxon>Laurasiatheria</taxon>
        <taxon>Artiodactyla</taxon>
        <taxon>Ruminantia</taxon>
        <taxon>Pecora</taxon>
        <taxon>Bovidae</taxon>
        <taxon>Bovinae</taxon>
        <taxon>Bos</taxon>
    </lineage>
</organism>
<proteinExistence type="evidence at protein level"/>
<keyword id="KW-0007">Acetylation</keyword>
<keyword id="KW-1003">Cell membrane</keyword>
<keyword id="KW-0175">Coiled coil</keyword>
<keyword id="KW-0963">Cytoplasm</keyword>
<keyword id="KW-0206">Cytoskeleton</keyword>
<keyword id="KW-0903">Direct protein sequencing</keyword>
<keyword id="KW-0273">Eye lens protein</keyword>
<keyword id="KW-0403">Intermediate filament</keyword>
<keyword id="KW-0472">Membrane</keyword>
<keyword id="KW-0597">Phosphoprotein</keyword>
<keyword id="KW-1185">Reference proteome</keyword>
<keyword id="KW-0677">Repeat</keyword>
<accession>Q28177</accession>
<accession>Q05B61</accession>
<comment type="function">
    <text evidence="1 2">Required for the correct formation of lens intermediate filaments as part of a complex composed of BFSP1, BFSP2 and CRYAA (By similarity). Plays a role in maintenance of retinal lens optical clarity (By similarity).</text>
</comment>
<comment type="subunit">
    <text evidence="2 7">Part of a complex required for lens intermediate filament formation composed of BFSP1, BFSP2 and CRYAA (PubMed:7504675). Found in a complex composed of PPL (via C-terminal linker domain), BFSP1 and BFSP2 in the retinal lens (By similarity). Within the complex interacts with PPL (via C-terminal linker domain) and with BFSP1 (By similarity). Identified in a complex that contains VIM, EZR, AHNAK, BFSP1, BFSP2, ANK2, PLEC, PRX and spectrin (By similarity). Interacts with LGSN (By similarity). Interacts with VIM (By similarity).</text>
</comment>
<comment type="subcellular location">
    <subcellularLocation>
        <location evidence="7 8">Cell membrane</location>
        <topology evidence="7">Peripheral membrane protein</topology>
        <orientation evidence="7">Cytoplasmic side</orientation>
    </subcellularLocation>
    <subcellularLocation>
        <location evidence="8">Cytoplasm</location>
    </subcellularLocation>
    <subcellularLocation>
        <location evidence="7">Cytoplasm</location>
        <location evidence="7">Cytoskeleton</location>
    </subcellularLocation>
    <subcellularLocation>
        <location evidence="7">Cytoplasm</location>
        <location evidence="7">Cell cortex</location>
    </subcellularLocation>
    <text evidence="8">Expressed primarily at the plasma membrane in peripheral lens fiber cells, however also localizes to the cytoplasm in mature lens fiber cells.</text>
</comment>
<comment type="tissue specificity">
    <text evidence="6 7 8">Abundantly expressed in both the inner and outer cortex of the retina, expressed at a lower level in the nucleus of the retina (at protein level) (PubMed:19875662). Detected in eye lens fiber cells (at protein level) (PubMed:7504675, PubMed:7588880).</text>
</comment>
<comment type="similarity">
    <text evidence="4">Belongs to the intermediate filament family.</text>
</comment>
<dbReference type="EMBL" id="X75160">
    <property type="protein sequence ID" value="CAA53003.1"/>
    <property type="molecule type" value="mRNA"/>
</dbReference>
<dbReference type="EMBL" id="BC122762">
    <property type="protein sequence ID" value="AAI22763.1"/>
    <property type="molecule type" value="mRNA"/>
</dbReference>
<dbReference type="RefSeq" id="NP_776673.1">
    <property type="nucleotide sequence ID" value="NM_174248.3"/>
</dbReference>
<dbReference type="SMR" id="Q28177"/>
<dbReference type="FunCoup" id="Q28177">
    <property type="interactions" value="226"/>
</dbReference>
<dbReference type="STRING" id="9913.ENSBTAP00000024638"/>
<dbReference type="iPTMnet" id="Q28177"/>
<dbReference type="PaxDb" id="9913-ENSBTAP00000024638"/>
<dbReference type="Ensembl" id="ENSBTAT00000024638.6">
    <property type="protein sequence ID" value="ENSBTAP00000024638.6"/>
    <property type="gene ID" value="ENSBTAG00000017659.6"/>
</dbReference>
<dbReference type="GeneID" id="281645"/>
<dbReference type="KEGG" id="bta:281645"/>
<dbReference type="CTD" id="8419"/>
<dbReference type="VEuPathDB" id="HostDB:ENSBTAG00000017659"/>
<dbReference type="VGNC" id="VGNC:26479">
    <property type="gene designation" value="BFSP2"/>
</dbReference>
<dbReference type="eggNOG" id="ENOG502QTD1">
    <property type="taxonomic scope" value="Eukaryota"/>
</dbReference>
<dbReference type="GeneTree" id="ENSGT00940000159820"/>
<dbReference type="InParanoid" id="Q28177"/>
<dbReference type="OMA" id="ETIRIQW"/>
<dbReference type="OrthoDB" id="8851579at2759"/>
<dbReference type="Proteomes" id="UP000009136">
    <property type="component" value="Chromosome 1"/>
</dbReference>
<dbReference type="Bgee" id="ENSBTAG00000017659">
    <property type="expression patterns" value="Expressed in temporal cortex and 76 other cell types or tissues"/>
</dbReference>
<dbReference type="GO" id="GO:0005938">
    <property type="term" value="C:cell cortex"/>
    <property type="evidence" value="ECO:0007669"/>
    <property type="project" value="UniProtKB-SubCell"/>
</dbReference>
<dbReference type="GO" id="GO:0005856">
    <property type="term" value="C:cytoskeleton"/>
    <property type="evidence" value="ECO:0000318"/>
    <property type="project" value="GO_Central"/>
</dbReference>
<dbReference type="GO" id="GO:0005882">
    <property type="term" value="C:intermediate filament"/>
    <property type="evidence" value="ECO:0000250"/>
    <property type="project" value="UniProtKB"/>
</dbReference>
<dbReference type="GO" id="GO:0005886">
    <property type="term" value="C:plasma membrane"/>
    <property type="evidence" value="ECO:0007669"/>
    <property type="project" value="UniProtKB-SubCell"/>
</dbReference>
<dbReference type="GO" id="GO:0005212">
    <property type="term" value="F:structural constituent of eye lens"/>
    <property type="evidence" value="ECO:0007669"/>
    <property type="project" value="UniProtKB-KW"/>
</dbReference>
<dbReference type="GO" id="GO:0048469">
    <property type="term" value="P:cell maturation"/>
    <property type="evidence" value="ECO:0007669"/>
    <property type="project" value="Ensembl"/>
</dbReference>
<dbReference type="GO" id="GO:0045109">
    <property type="term" value="P:intermediate filament organization"/>
    <property type="evidence" value="ECO:0000250"/>
    <property type="project" value="UniProtKB"/>
</dbReference>
<dbReference type="GO" id="GO:0070307">
    <property type="term" value="P:lens fiber cell development"/>
    <property type="evidence" value="ECO:0007669"/>
    <property type="project" value="Ensembl"/>
</dbReference>
<dbReference type="FunFam" id="1.20.5.1160:FF:000015">
    <property type="entry name" value="phakinin isoform X1"/>
    <property type="match status" value="1"/>
</dbReference>
<dbReference type="Gene3D" id="1.20.5.170">
    <property type="match status" value="1"/>
</dbReference>
<dbReference type="Gene3D" id="1.20.5.500">
    <property type="entry name" value="Single helix bin"/>
    <property type="match status" value="1"/>
</dbReference>
<dbReference type="Gene3D" id="1.20.5.1160">
    <property type="entry name" value="Vasodilator-stimulated phosphoprotein"/>
    <property type="match status" value="1"/>
</dbReference>
<dbReference type="InterPro" id="IPR039008">
    <property type="entry name" value="IF_rod_dom"/>
</dbReference>
<dbReference type="InterPro" id="IPR002957">
    <property type="entry name" value="Keratin_I"/>
</dbReference>
<dbReference type="PANTHER" id="PTHR23239">
    <property type="entry name" value="INTERMEDIATE FILAMENT"/>
    <property type="match status" value="1"/>
</dbReference>
<dbReference type="PANTHER" id="PTHR23239:SF32">
    <property type="entry name" value="PHAKININ"/>
    <property type="match status" value="1"/>
</dbReference>
<dbReference type="Pfam" id="PF00038">
    <property type="entry name" value="Filament"/>
    <property type="match status" value="1"/>
</dbReference>
<dbReference type="PRINTS" id="PR01248">
    <property type="entry name" value="TYPE1KERATIN"/>
</dbReference>
<dbReference type="SMART" id="SM01391">
    <property type="entry name" value="Filament"/>
    <property type="match status" value="1"/>
</dbReference>
<dbReference type="SUPFAM" id="SSF64593">
    <property type="entry name" value="Intermediate filament protein, coiled coil region"/>
    <property type="match status" value="1"/>
</dbReference>
<dbReference type="PROSITE" id="PS51842">
    <property type="entry name" value="IF_ROD_2"/>
    <property type="match status" value="1"/>
</dbReference>
<gene>
    <name type="primary">BFSP2</name>
</gene>
<name>BFSP2_BOVIN</name>
<sequence>MSTRRVVVDAPAGASSSMPLQRHKASFRAAQSPSSLDGLPASRTVAVSGLVRTPRVYVGMAPSGPTGGLGARVTRRALGISSVFLQGLRSSGLATAPAPSLERDLGAVEDLGGCLVEYMAKVHALEKVSQELEAQLRMHLESKATRSENWGALRASWASSCQQVGEAVLENARLMLQTENIQAGADDFKERYENEQPFRKAAEEEINSLYKVIDEANSSKMDLESQIESLKEELGFLSRSYEEDVKMLYKQLAGSELEQLNVPIGTGLDDILETIRIHWERDVEKNRLQAGALLQAKQQAELARRAQTQEEKLAAALRVELHNTSCQIQSLQAETESLRALKRGLENTLHDAKHWHDIELQNLGAVVSRLEAELREMRAEAEQQLQAREHLLSHKCQLQRDVASYHALLDREESS</sequence>